<organism>
    <name type="scientific">Escherichia coli O17:K52:H18 (strain UMN026 / ExPEC)</name>
    <dbReference type="NCBI Taxonomy" id="585056"/>
    <lineage>
        <taxon>Bacteria</taxon>
        <taxon>Pseudomonadati</taxon>
        <taxon>Pseudomonadota</taxon>
        <taxon>Gammaproteobacteria</taxon>
        <taxon>Enterobacterales</taxon>
        <taxon>Enterobacteriaceae</taxon>
        <taxon>Escherichia</taxon>
    </lineage>
</organism>
<reference key="1">
    <citation type="journal article" date="2009" name="PLoS Genet.">
        <title>Organised genome dynamics in the Escherichia coli species results in highly diverse adaptive paths.</title>
        <authorList>
            <person name="Touchon M."/>
            <person name="Hoede C."/>
            <person name="Tenaillon O."/>
            <person name="Barbe V."/>
            <person name="Baeriswyl S."/>
            <person name="Bidet P."/>
            <person name="Bingen E."/>
            <person name="Bonacorsi S."/>
            <person name="Bouchier C."/>
            <person name="Bouvet O."/>
            <person name="Calteau A."/>
            <person name="Chiapello H."/>
            <person name="Clermont O."/>
            <person name="Cruveiller S."/>
            <person name="Danchin A."/>
            <person name="Diard M."/>
            <person name="Dossat C."/>
            <person name="Karoui M.E."/>
            <person name="Frapy E."/>
            <person name="Garry L."/>
            <person name="Ghigo J.M."/>
            <person name="Gilles A.M."/>
            <person name="Johnson J."/>
            <person name="Le Bouguenec C."/>
            <person name="Lescat M."/>
            <person name="Mangenot S."/>
            <person name="Martinez-Jehanne V."/>
            <person name="Matic I."/>
            <person name="Nassif X."/>
            <person name="Oztas S."/>
            <person name="Petit M.A."/>
            <person name="Pichon C."/>
            <person name="Rouy Z."/>
            <person name="Ruf C.S."/>
            <person name="Schneider D."/>
            <person name="Tourret J."/>
            <person name="Vacherie B."/>
            <person name="Vallenet D."/>
            <person name="Medigue C."/>
            <person name="Rocha E.P.C."/>
            <person name="Denamur E."/>
        </authorList>
    </citation>
    <scope>NUCLEOTIDE SEQUENCE [LARGE SCALE GENOMIC DNA]</scope>
    <source>
        <strain>UMN026 / ExPEC</strain>
    </source>
</reference>
<keyword id="KW-0963">Cytoplasm</keyword>
<keyword id="KW-0808">Transferase</keyword>
<comment type="function">
    <text evidence="1">Transferase that catalyzes the transfer of sulfur from thiosulfate to thiophilic acceptors such as cyanide or dithiols. May function in a CysM-independent thiosulfate assimilation pathway by catalyzing the conversion of thiosulfate to sulfite, which can then be used for L-cysteine biosynthesis.</text>
</comment>
<comment type="catalytic activity">
    <reaction evidence="1">
        <text>thiosulfate + hydrogen cyanide = thiocyanate + sulfite + 2 H(+)</text>
        <dbReference type="Rhea" id="RHEA:16881"/>
        <dbReference type="ChEBI" id="CHEBI:15378"/>
        <dbReference type="ChEBI" id="CHEBI:17359"/>
        <dbReference type="ChEBI" id="CHEBI:18022"/>
        <dbReference type="ChEBI" id="CHEBI:18407"/>
        <dbReference type="ChEBI" id="CHEBI:33542"/>
        <dbReference type="EC" id="2.8.1.1"/>
    </reaction>
</comment>
<comment type="catalytic activity">
    <reaction evidence="1">
        <text>thiosulfate + [thioredoxin]-dithiol = [thioredoxin]-disulfide + hydrogen sulfide + sulfite + 2 H(+)</text>
        <dbReference type="Rhea" id="RHEA:83859"/>
        <dbReference type="Rhea" id="RHEA-COMP:10698"/>
        <dbReference type="Rhea" id="RHEA-COMP:10700"/>
        <dbReference type="ChEBI" id="CHEBI:15378"/>
        <dbReference type="ChEBI" id="CHEBI:17359"/>
        <dbReference type="ChEBI" id="CHEBI:29919"/>
        <dbReference type="ChEBI" id="CHEBI:29950"/>
        <dbReference type="ChEBI" id="CHEBI:33542"/>
        <dbReference type="ChEBI" id="CHEBI:50058"/>
    </reaction>
</comment>
<comment type="subcellular location">
    <subcellularLocation>
        <location evidence="1">Cytoplasm</location>
    </subcellularLocation>
</comment>
<comment type="similarity">
    <text evidence="1">Belongs to the GlpE family.</text>
</comment>
<evidence type="ECO:0000255" key="1">
    <source>
        <dbReference type="HAMAP-Rule" id="MF_01009"/>
    </source>
</evidence>
<dbReference type="EC" id="2.8.1.1" evidence="1"/>
<dbReference type="EMBL" id="CU928163">
    <property type="protein sequence ID" value="CAR15029.1"/>
    <property type="molecule type" value="Genomic_DNA"/>
</dbReference>
<dbReference type="RefSeq" id="WP_000371928.1">
    <property type="nucleotide sequence ID" value="NC_011751.1"/>
</dbReference>
<dbReference type="RefSeq" id="YP_002414534.1">
    <property type="nucleotide sequence ID" value="NC_011751.1"/>
</dbReference>
<dbReference type="SMR" id="B7NE29"/>
<dbReference type="STRING" id="585056.ECUMN_3883"/>
<dbReference type="GeneID" id="93778571"/>
<dbReference type="KEGG" id="eum:ECUMN_3883"/>
<dbReference type="PATRIC" id="fig|585056.7.peg.4057"/>
<dbReference type="HOGENOM" id="CLU_089574_14_0_6"/>
<dbReference type="Proteomes" id="UP000007097">
    <property type="component" value="Chromosome"/>
</dbReference>
<dbReference type="GO" id="GO:0005737">
    <property type="term" value="C:cytoplasm"/>
    <property type="evidence" value="ECO:0007669"/>
    <property type="project" value="UniProtKB-SubCell"/>
</dbReference>
<dbReference type="GO" id="GO:0004792">
    <property type="term" value="F:thiosulfate-cyanide sulfurtransferase activity"/>
    <property type="evidence" value="ECO:0007669"/>
    <property type="project" value="UniProtKB-UniRule"/>
</dbReference>
<dbReference type="GO" id="GO:0006071">
    <property type="term" value="P:glycerol metabolic process"/>
    <property type="evidence" value="ECO:0007669"/>
    <property type="project" value="UniProtKB-UniRule"/>
</dbReference>
<dbReference type="CDD" id="cd01444">
    <property type="entry name" value="GlpE_ST"/>
    <property type="match status" value="1"/>
</dbReference>
<dbReference type="FunFam" id="3.40.250.10:FF:000007">
    <property type="entry name" value="Thiosulfate sulfurtransferase GlpE"/>
    <property type="match status" value="1"/>
</dbReference>
<dbReference type="Gene3D" id="3.40.250.10">
    <property type="entry name" value="Rhodanese-like domain"/>
    <property type="match status" value="1"/>
</dbReference>
<dbReference type="HAMAP" id="MF_01009">
    <property type="entry name" value="Thiosulf_sulfurtr"/>
    <property type="match status" value="1"/>
</dbReference>
<dbReference type="InterPro" id="IPR050229">
    <property type="entry name" value="GlpE_sulfurtransferase"/>
</dbReference>
<dbReference type="InterPro" id="IPR001763">
    <property type="entry name" value="Rhodanese-like_dom"/>
</dbReference>
<dbReference type="InterPro" id="IPR036873">
    <property type="entry name" value="Rhodanese-like_dom_sf"/>
</dbReference>
<dbReference type="InterPro" id="IPR023695">
    <property type="entry name" value="Thiosulf_sulfurTrfase"/>
</dbReference>
<dbReference type="NCBIfam" id="NF001195">
    <property type="entry name" value="PRK00162.1"/>
    <property type="match status" value="1"/>
</dbReference>
<dbReference type="PANTHER" id="PTHR43031">
    <property type="entry name" value="FAD-DEPENDENT OXIDOREDUCTASE"/>
    <property type="match status" value="1"/>
</dbReference>
<dbReference type="PANTHER" id="PTHR43031:SF6">
    <property type="entry name" value="THIOSULFATE SULFURTRANSFERASE GLPE"/>
    <property type="match status" value="1"/>
</dbReference>
<dbReference type="Pfam" id="PF00581">
    <property type="entry name" value="Rhodanese"/>
    <property type="match status" value="1"/>
</dbReference>
<dbReference type="SMART" id="SM00450">
    <property type="entry name" value="RHOD"/>
    <property type="match status" value="1"/>
</dbReference>
<dbReference type="SUPFAM" id="SSF52821">
    <property type="entry name" value="Rhodanese/Cell cycle control phosphatase"/>
    <property type="match status" value="1"/>
</dbReference>
<dbReference type="PROSITE" id="PS50206">
    <property type="entry name" value="RHODANESE_3"/>
    <property type="match status" value="1"/>
</dbReference>
<protein>
    <recommendedName>
        <fullName evidence="1">Thiosulfate sulfurtransferase GlpE</fullName>
        <ecNumber evidence="1">2.8.1.1</ecNumber>
    </recommendedName>
</protein>
<gene>
    <name evidence="1" type="primary">glpE</name>
    <name type="ordered locus">ECUMN_3883</name>
</gene>
<name>GLPE_ECOLU</name>
<feature type="chain" id="PRO_1000134853" description="Thiosulfate sulfurtransferase GlpE">
    <location>
        <begin position="1"/>
        <end position="108"/>
    </location>
</feature>
<feature type="domain" description="Rhodanese" evidence="1">
    <location>
        <begin position="17"/>
        <end position="105"/>
    </location>
</feature>
<feature type="active site" description="Cysteine persulfide intermediate" evidence="1">
    <location>
        <position position="65"/>
    </location>
</feature>
<accession>B7NE29</accession>
<sequence length="108" mass="12082">MDQFECINVADAHQKLQEKEAVLVDIRDPQSFAMGHAVQAFHLTNDTLGAFMRDNDFDTPVMVMCYHGNSSKGAAQYLLQQGYDVVYSIDGGFEAWQRQFPAEVAYGA</sequence>
<proteinExistence type="inferred from homology"/>